<gene>
    <name evidence="1" type="primary">ybeY</name>
    <name type="ordered locus">STH531</name>
</gene>
<feature type="chain" id="PRO_0000102548" description="Endoribonuclease YbeY">
    <location>
        <begin position="1"/>
        <end position="156"/>
    </location>
</feature>
<feature type="binding site" evidence="1">
    <location>
        <position position="122"/>
    </location>
    <ligand>
        <name>Zn(2+)</name>
        <dbReference type="ChEBI" id="CHEBI:29105"/>
        <note>catalytic</note>
    </ligand>
</feature>
<feature type="binding site" evidence="1">
    <location>
        <position position="126"/>
    </location>
    <ligand>
        <name>Zn(2+)</name>
        <dbReference type="ChEBI" id="CHEBI:29105"/>
        <note>catalytic</note>
    </ligand>
</feature>
<feature type="binding site" evidence="1">
    <location>
        <position position="132"/>
    </location>
    <ligand>
        <name>Zn(2+)</name>
        <dbReference type="ChEBI" id="CHEBI:29105"/>
        <note>catalytic</note>
    </ligand>
</feature>
<name>YBEY_SYMTH</name>
<organism>
    <name type="scientific">Symbiobacterium thermophilum (strain DSM 24528 / JCM 14929 / IAM 14863 / T)</name>
    <dbReference type="NCBI Taxonomy" id="292459"/>
    <lineage>
        <taxon>Bacteria</taxon>
        <taxon>Bacillati</taxon>
        <taxon>Bacillota</taxon>
        <taxon>Clostridia</taxon>
        <taxon>Eubacteriales</taxon>
        <taxon>Symbiobacteriaceae</taxon>
        <taxon>Symbiobacterium</taxon>
    </lineage>
</organism>
<protein>
    <recommendedName>
        <fullName evidence="1">Endoribonuclease YbeY</fullName>
        <ecNumber evidence="1">3.1.-.-</ecNumber>
    </recommendedName>
</protein>
<accession>Q67S27</accession>
<sequence length="156" mass="17275">MEIWVNNDQEIVEFTEEHEELIRRVAERALELAGAGLGSNVSVSVTLVDDETITDLNRDHRGLASPTDVLSFSQLEGEDMGDLPEGEPMPLGDIVISLERCVSQAAEYGHSFERELGFLTAHGMLHLMGWDHQTPEDEARMMAKTEEILAGLGLSR</sequence>
<reference key="1">
    <citation type="journal article" date="2004" name="Nucleic Acids Res.">
        <title>Genome sequence of Symbiobacterium thermophilum, an uncultivable bacterium that depends on microbial commensalism.</title>
        <authorList>
            <person name="Ueda K."/>
            <person name="Yamashita A."/>
            <person name="Ishikawa J."/>
            <person name="Shimada M."/>
            <person name="Watsuji T."/>
            <person name="Morimura K."/>
            <person name="Ikeda H."/>
            <person name="Hattori M."/>
            <person name="Beppu T."/>
        </authorList>
    </citation>
    <scope>NUCLEOTIDE SEQUENCE [LARGE SCALE GENOMIC DNA]</scope>
    <source>
        <strain>DSM 24528 / JCM 14929 / IAM 14863 / T</strain>
    </source>
</reference>
<keyword id="KW-0963">Cytoplasm</keyword>
<keyword id="KW-0255">Endonuclease</keyword>
<keyword id="KW-0378">Hydrolase</keyword>
<keyword id="KW-0479">Metal-binding</keyword>
<keyword id="KW-0540">Nuclease</keyword>
<keyword id="KW-1185">Reference proteome</keyword>
<keyword id="KW-0690">Ribosome biogenesis</keyword>
<keyword id="KW-0698">rRNA processing</keyword>
<keyword id="KW-0862">Zinc</keyword>
<proteinExistence type="inferred from homology"/>
<comment type="function">
    <text evidence="1">Single strand-specific metallo-endoribonuclease involved in late-stage 70S ribosome quality control and in maturation of the 3' terminus of the 16S rRNA.</text>
</comment>
<comment type="cofactor">
    <cofactor evidence="1">
        <name>Zn(2+)</name>
        <dbReference type="ChEBI" id="CHEBI:29105"/>
    </cofactor>
    <text evidence="1">Binds 1 zinc ion.</text>
</comment>
<comment type="subcellular location">
    <subcellularLocation>
        <location evidence="1">Cytoplasm</location>
    </subcellularLocation>
</comment>
<comment type="similarity">
    <text evidence="1">Belongs to the endoribonuclease YbeY family.</text>
</comment>
<evidence type="ECO:0000255" key="1">
    <source>
        <dbReference type="HAMAP-Rule" id="MF_00009"/>
    </source>
</evidence>
<dbReference type="EC" id="3.1.-.-" evidence="1"/>
<dbReference type="EMBL" id="AP006840">
    <property type="protein sequence ID" value="BAD39516.1"/>
    <property type="molecule type" value="Genomic_DNA"/>
</dbReference>
<dbReference type="RefSeq" id="WP_011194665.1">
    <property type="nucleotide sequence ID" value="NC_006177.1"/>
</dbReference>
<dbReference type="SMR" id="Q67S27"/>
<dbReference type="STRING" id="292459.STH531"/>
<dbReference type="KEGG" id="sth:STH531"/>
<dbReference type="eggNOG" id="COG0319">
    <property type="taxonomic scope" value="Bacteria"/>
</dbReference>
<dbReference type="HOGENOM" id="CLU_106710_3_0_9"/>
<dbReference type="OrthoDB" id="9807740at2"/>
<dbReference type="Proteomes" id="UP000000417">
    <property type="component" value="Chromosome"/>
</dbReference>
<dbReference type="GO" id="GO:0005737">
    <property type="term" value="C:cytoplasm"/>
    <property type="evidence" value="ECO:0007669"/>
    <property type="project" value="UniProtKB-SubCell"/>
</dbReference>
<dbReference type="GO" id="GO:0004222">
    <property type="term" value="F:metalloendopeptidase activity"/>
    <property type="evidence" value="ECO:0007669"/>
    <property type="project" value="InterPro"/>
</dbReference>
<dbReference type="GO" id="GO:0004521">
    <property type="term" value="F:RNA endonuclease activity"/>
    <property type="evidence" value="ECO:0007669"/>
    <property type="project" value="UniProtKB-UniRule"/>
</dbReference>
<dbReference type="GO" id="GO:0008270">
    <property type="term" value="F:zinc ion binding"/>
    <property type="evidence" value="ECO:0007669"/>
    <property type="project" value="UniProtKB-UniRule"/>
</dbReference>
<dbReference type="GO" id="GO:0006364">
    <property type="term" value="P:rRNA processing"/>
    <property type="evidence" value="ECO:0007669"/>
    <property type="project" value="UniProtKB-UniRule"/>
</dbReference>
<dbReference type="Gene3D" id="3.40.390.30">
    <property type="entry name" value="Metalloproteases ('zincins'), catalytic domain"/>
    <property type="match status" value="1"/>
</dbReference>
<dbReference type="HAMAP" id="MF_00009">
    <property type="entry name" value="Endoribonucl_YbeY"/>
    <property type="match status" value="1"/>
</dbReference>
<dbReference type="InterPro" id="IPR023091">
    <property type="entry name" value="MetalPrtase_cat_dom_sf_prd"/>
</dbReference>
<dbReference type="InterPro" id="IPR002036">
    <property type="entry name" value="YbeY"/>
</dbReference>
<dbReference type="InterPro" id="IPR020549">
    <property type="entry name" value="YbeY_CS"/>
</dbReference>
<dbReference type="NCBIfam" id="TIGR00043">
    <property type="entry name" value="rRNA maturation RNase YbeY"/>
    <property type="match status" value="1"/>
</dbReference>
<dbReference type="PANTHER" id="PTHR46986">
    <property type="entry name" value="ENDORIBONUCLEASE YBEY, CHLOROPLASTIC"/>
    <property type="match status" value="1"/>
</dbReference>
<dbReference type="PANTHER" id="PTHR46986:SF1">
    <property type="entry name" value="ENDORIBONUCLEASE YBEY, CHLOROPLASTIC"/>
    <property type="match status" value="1"/>
</dbReference>
<dbReference type="Pfam" id="PF02130">
    <property type="entry name" value="YbeY"/>
    <property type="match status" value="1"/>
</dbReference>
<dbReference type="SUPFAM" id="SSF55486">
    <property type="entry name" value="Metalloproteases ('zincins'), catalytic domain"/>
    <property type="match status" value="1"/>
</dbReference>
<dbReference type="PROSITE" id="PS01306">
    <property type="entry name" value="UPF0054"/>
    <property type="match status" value="1"/>
</dbReference>